<gene>
    <name type="primary">mdtQ</name>
    <name type="synonym">yohG</name>
    <name type="synonym">yohH</name>
    <name type="ordered locus">b2139</name>
    <name type="ordered locus">JW5838/JW5358</name>
    <name type="ORF">b2138</name>
</gene>
<organism>
    <name type="scientific">Escherichia coli (strain K12)</name>
    <dbReference type="NCBI Taxonomy" id="83333"/>
    <lineage>
        <taxon>Bacteria</taxon>
        <taxon>Pseudomonadati</taxon>
        <taxon>Pseudomonadota</taxon>
        <taxon>Gammaproteobacteria</taxon>
        <taxon>Enterobacterales</taxon>
        <taxon>Enterobacteriaceae</taxon>
        <taxon>Escherichia</taxon>
    </lineage>
</organism>
<comment type="function">
    <text evidence="2">Could be involved in resistance to puromycin, acriflavine and tetraphenylarsonium chloride.</text>
</comment>
<comment type="subcellular location">
    <subcellularLocation>
        <location evidence="3">Cell outer membrane</location>
        <topology evidence="1">Lipid-anchor</topology>
    </subcellularLocation>
</comment>
<comment type="similarity">
    <text evidence="3">Belongs to the outer membrane factor (OMF) (TC 1.B.17) family.</text>
</comment>
<comment type="caution">
    <text evidence="3">Could be the product of a pseudogene.</text>
</comment>
<comment type="sequence caution" evidence="3">
    <conflict type="frameshift">
        <sequence resource="EMBL-CDS" id="AAA60501"/>
    </conflict>
    <text>Produces two separate ORFs.</text>
</comment>
<comment type="sequence caution" evidence="3">
    <conflict type="frameshift">
        <sequence resource="EMBL-CDS" id="AAA60502"/>
    </conflict>
    <text>Produces two separate ORFs.</text>
</comment>
<comment type="sequence caution" evidence="3">
    <conflict type="frameshift">
        <sequence resource="EMBL-CDS" id="BAE76615"/>
    </conflict>
    <text>Produces two separate ORFs.</text>
</comment>
<comment type="sequence caution" evidence="3">
    <conflict type="frameshift">
        <sequence resource="EMBL-CDS" id="BAE76616"/>
    </conflict>
    <text>Produces two separate ORFs.</text>
</comment>
<comment type="sequence caution" evidence="3">
    <conflict type="frameshift">
        <sequence resource="EMBL" id="U00096"/>
    </conflict>
    <text>Produces two separate ORFs.</text>
</comment>
<sequence>MNRDSFYPAIACFPLLLMLAGCAPMHETRQALSQQTPAAQVDTALPTALKMVGQTXQWWLEYHDNQLTSLINNALQNAPDMQVAEQRIQLAEAQAKAVATQDGPQIDFSADMERQKMSAEGLMGPFALNDPAAGTTGPWYTNGTFGLTAGWHLDIWGKNRAEVTARLGTVKARAAEREQTRQLLAGSVARLYWEWQTQAALNTVLQQIEKEQNTIIATDRQLYQNGITSSVEGVETDINASKTRQQLNDVAGKMKIIEARLSALTNNQTKSLKLKPVALPKVASQLPDELGYSLLARRADLQAAHWYVESSLSTIDAAKAAFYPDINLMAFLQQDALHLSDLFRHSAQQMGVTAGLTLPIFDSGRLNANLDIAKAESNLSIASYNKAVVEAVNDVARAASQVQTLAEKNQHQAQIERDALRVVGLAQARFNAGIIAGSRVSEARIPALRERANGLLLQGQWLDASIQLTGALGGGYKR</sequence>
<keyword id="KW-0046">Antibiotic resistance</keyword>
<keyword id="KW-0998">Cell outer membrane</keyword>
<keyword id="KW-0449">Lipoprotein</keyword>
<keyword id="KW-0472">Membrane</keyword>
<keyword id="KW-0564">Palmitate</keyword>
<keyword id="KW-1185">Reference proteome</keyword>
<keyword id="KW-0732">Signal</keyword>
<keyword id="KW-0812">Transmembrane</keyword>
<keyword id="KW-1134">Transmembrane beta strand</keyword>
<name>MDTQ_ECOLI</name>
<feature type="signal peptide" evidence="1">
    <location>
        <begin position="1"/>
        <end position="21"/>
    </location>
</feature>
<feature type="chain" id="PRO_0000031013" description="Putative multidrug resistance outer membrane protein MdtQ">
    <location>
        <begin position="22"/>
        <end position="478"/>
    </location>
</feature>
<feature type="lipid moiety-binding region" description="N-palmitoyl cysteine" evidence="1">
    <location>
        <position position="22"/>
    </location>
</feature>
<feature type="lipid moiety-binding region" description="S-diacylglycerol cysteine" evidence="1">
    <location>
        <position position="22"/>
    </location>
</feature>
<evidence type="ECO:0000255" key="1">
    <source>
        <dbReference type="PROSITE-ProRule" id="PRU00303"/>
    </source>
</evidence>
<evidence type="ECO:0000269" key="2">
    <source>
    </source>
</evidence>
<evidence type="ECO:0000305" key="3"/>
<proteinExistence type="uncertain"/>
<reference key="1">
    <citation type="submission" date="1993-10" db="EMBL/GenBank/DDBJ databases">
        <title>Automated multiplex sequencing of the E.coli genome.</title>
        <authorList>
            <person name="Richterich P."/>
            <person name="Lakey N."/>
            <person name="Gryan G."/>
            <person name="Jaehn L."/>
            <person name="Mintz L."/>
            <person name="Robison K."/>
            <person name="Church G.M."/>
        </authorList>
    </citation>
    <scope>NUCLEOTIDE SEQUENCE [LARGE SCALE GENOMIC DNA]</scope>
    <source>
        <strain>K12 / BHB2600</strain>
    </source>
</reference>
<reference key="2">
    <citation type="journal article" date="1997" name="Science">
        <title>The complete genome sequence of Escherichia coli K-12.</title>
        <authorList>
            <person name="Blattner F.R."/>
            <person name="Plunkett G. III"/>
            <person name="Bloch C.A."/>
            <person name="Perna N.T."/>
            <person name="Burland V."/>
            <person name="Riley M."/>
            <person name="Collado-Vides J."/>
            <person name="Glasner J.D."/>
            <person name="Rode C.K."/>
            <person name="Mayhew G.F."/>
            <person name="Gregor J."/>
            <person name="Davis N.W."/>
            <person name="Kirkpatrick H.A."/>
            <person name="Goeden M.A."/>
            <person name="Rose D.J."/>
            <person name="Mau B."/>
            <person name="Shao Y."/>
        </authorList>
    </citation>
    <scope>NUCLEOTIDE SEQUENCE [LARGE SCALE GENOMIC DNA]</scope>
    <source>
        <strain>K12 / MG1655 / ATCC 47076</strain>
    </source>
</reference>
<reference key="3">
    <citation type="journal article" date="2006" name="Mol. Syst. Biol.">
        <title>Highly accurate genome sequences of Escherichia coli K-12 strains MG1655 and W3110.</title>
        <authorList>
            <person name="Hayashi K."/>
            <person name="Morooka N."/>
            <person name="Yamamoto Y."/>
            <person name="Fujita K."/>
            <person name="Isono K."/>
            <person name="Choi S."/>
            <person name="Ohtsubo E."/>
            <person name="Baba T."/>
            <person name="Wanner B.L."/>
            <person name="Mori H."/>
            <person name="Horiuchi T."/>
        </authorList>
    </citation>
    <scope>NUCLEOTIDE SEQUENCE [LARGE SCALE GENOMIC DNA]</scope>
    <source>
        <strain>K12 / W3110 / ATCC 27325 / DSM 5911</strain>
    </source>
</reference>
<reference key="4">
    <citation type="unpublished observations" date="1999-06">
        <authorList>
            <person name="Rudd K.E."/>
        </authorList>
    </citation>
    <scope>CONCEPTUAL TRANSLATION</scope>
</reference>
<reference key="5">
    <citation type="journal article" date="2001" name="Antimicrob. Agents Chemother.">
        <title>Antibiotic susceptibility profiles of Escherichia coli strains lacking multidrug efflux pump genes.</title>
        <authorList>
            <person name="Sulavik M.C."/>
            <person name="Houseweart C."/>
            <person name="Cramer C."/>
            <person name="Jiwani N."/>
            <person name="Murgolo N."/>
            <person name="Greene J."/>
            <person name="DiDomenico B."/>
            <person name="Shaw K.J."/>
            <person name="Miller G.H."/>
            <person name="Hare R."/>
            <person name="Shimer G."/>
        </authorList>
    </citation>
    <scope>FUNCTION</scope>
</reference>
<protein>
    <recommendedName>
        <fullName>Putative multidrug resistance outer membrane protein MdtQ</fullName>
    </recommendedName>
</protein>
<dbReference type="EMBL" id="U00007">
    <property type="protein sequence ID" value="AAA60501.1"/>
    <property type="status" value="ALT_FRAME"/>
    <property type="molecule type" value="Genomic_DNA"/>
</dbReference>
<dbReference type="EMBL" id="U00007">
    <property type="protein sequence ID" value="AAA60502.1"/>
    <property type="status" value="ALT_SEQ"/>
    <property type="molecule type" value="Genomic_DNA"/>
</dbReference>
<dbReference type="EMBL" id="U00096">
    <property type="status" value="NOT_ANNOTATED_CDS"/>
    <property type="molecule type" value="Genomic_DNA"/>
</dbReference>
<dbReference type="EMBL" id="AP009048">
    <property type="protein sequence ID" value="BAE76615.1"/>
    <property type="status" value="ALT_FRAME"/>
    <property type="molecule type" value="Genomic_DNA"/>
</dbReference>
<dbReference type="EMBL" id="AP009048">
    <property type="protein sequence ID" value="BAE76616.1"/>
    <property type="status" value="ALT_SEQ"/>
    <property type="molecule type" value="Genomic_DNA"/>
</dbReference>
<dbReference type="PIR" id="A64982">
    <property type="entry name" value="A64982"/>
</dbReference>
<dbReference type="PIR" id="B64982">
    <property type="entry name" value="B64982"/>
</dbReference>
<dbReference type="BioGRID" id="4260455">
    <property type="interactions" value="241"/>
</dbReference>
<dbReference type="BioGRID" id="4260456">
    <property type="interactions" value="78"/>
</dbReference>
<dbReference type="FunCoup" id="P33369">
    <property type="interactions" value="44"/>
</dbReference>
<dbReference type="IntAct" id="P33369">
    <property type="interactions" value="1"/>
</dbReference>
<dbReference type="TCDB" id="1.B.17.3.10">
    <property type="family name" value="the outer membrane factor (omf) family"/>
</dbReference>
<dbReference type="KEGG" id="ecj:JW5358"/>
<dbReference type="KEGG" id="ecj:JW5838"/>
<dbReference type="EchoBASE" id="EB1956"/>
<dbReference type="eggNOG" id="COG1538">
    <property type="taxonomic scope" value="Bacteria"/>
</dbReference>
<dbReference type="HOGENOM" id="CLU_012817_6_0_6"/>
<dbReference type="InParanoid" id="P33369"/>
<dbReference type="PhylomeDB" id="P33369"/>
<dbReference type="Proteomes" id="UP000000625">
    <property type="component" value="Chromosome"/>
</dbReference>
<dbReference type="GO" id="GO:0009279">
    <property type="term" value="C:cell outer membrane"/>
    <property type="evidence" value="ECO:0007669"/>
    <property type="project" value="UniProtKB-SubCell"/>
</dbReference>
<dbReference type="GO" id="GO:0016020">
    <property type="term" value="C:membrane"/>
    <property type="evidence" value="ECO:0000318"/>
    <property type="project" value="GO_Central"/>
</dbReference>
<dbReference type="GO" id="GO:0015562">
    <property type="term" value="F:efflux transmembrane transporter activity"/>
    <property type="evidence" value="ECO:0007669"/>
    <property type="project" value="InterPro"/>
</dbReference>
<dbReference type="GO" id="GO:0022857">
    <property type="term" value="F:transmembrane transporter activity"/>
    <property type="evidence" value="ECO:0000318"/>
    <property type="project" value="GO_Central"/>
</dbReference>
<dbReference type="GO" id="GO:0046677">
    <property type="term" value="P:response to antibiotic"/>
    <property type="evidence" value="ECO:0007669"/>
    <property type="project" value="UniProtKB-KW"/>
</dbReference>
<dbReference type="GO" id="GO:0055085">
    <property type="term" value="P:transmembrane transport"/>
    <property type="evidence" value="ECO:0000318"/>
    <property type="project" value="GO_Central"/>
</dbReference>
<dbReference type="Gene3D" id="1.20.1600.10">
    <property type="entry name" value="Outer membrane efflux proteins (OEP)"/>
    <property type="match status" value="1"/>
</dbReference>
<dbReference type="Gene3D" id="2.20.200.10">
    <property type="entry name" value="Outer membrane efflux proteins (OEP)"/>
    <property type="match status" value="1"/>
</dbReference>
<dbReference type="InterPro" id="IPR050737">
    <property type="entry name" value="OMF"/>
</dbReference>
<dbReference type="InterPro" id="IPR003423">
    <property type="entry name" value="OMP_efflux"/>
</dbReference>
<dbReference type="InterPro" id="IPR010131">
    <property type="entry name" value="RND_efflux_OM_lipoprot_NodT"/>
</dbReference>
<dbReference type="NCBIfam" id="TIGR01845">
    <property type="entry name" value="outer_NodT"/>
    <property type="match status" value="1"/>
</dbReference>
<dbReference type="NCBIfam" id="NF008524">
    <property type="entry name" value="PRK11459.1"/>
    <property type="match status" value="1"/>
</dbReference>
<dbReference type="PANTHER" id="PTHR30203:SF20">
    <property type="entry name" value="MULTIDRUG RESISTANCE OUTER MEMBRANE PROTEIN MDTP-RELATED"/>
    <property type="match status" value="1"/>
</dbReference>
<dbReference type="PANTHER" id="PTHR30203">
    <property type="entry name" value="OUTER MEMBRANE CATION EFFLUX PROTEIN"/>
    <property type="match status" value="1"/>
</dbReference>
<dbReference type="Pfam" id="PF02321">
    <property type="entry name" value="OEP"/>
    <property type="match status" value="2"/>
</dbReference>
<dbReference type="SUPFAM" id="SSF56954">
    <property type="entry name" value="Outer membrane efflux proteins (OEP)"/>
    <property type="match status" value="1"/>
</dbReference>
<dbReference type="PROSITE" id="PS51257">
    <property type="entry name" value="PROKAR_LIPOPROTEIN"/>
    <property type="match status" value="1"/>
</dbReference>
<accession>P33369</accession>
<accession>P33370</accession>
<accession>Q2MAU0</accession>
<accession>Q2MAU1</accession>